<reference key="1">
    <citation type="journal article" date="2010" name="Appl. Environ. Microbiol.">
        <title>Conserved symbiotic plasmid DNA sequences in the multireplicon pangenomic structure of Rhizobium etli.</title>
        <authorList>
            <person name="Gonzalez V."/>
            <person name="Acosta J.L."/>
            <person name="Santamaria R.I."/>
            <person name="Bustos P."/>
            <person name="Fernandez J.L."/>
            <person name="Hernandez Gonzalez I.L."/>
            <person name="Diaz R."/>
            <person name="Flores M."/>
            <person name="Palacios R."/>
            <person name="Mora J."/>
            <person name="Davila G."/>
        </authorList>
    </citation>
    <scope>NUCLEOTIDE SEQUENCE [LARGE SCALE GENOMIC DNA]</scope>
    <source>
        <strain>CIAT 652</strain>
    </source>
</reference>
<organism>
    <name type="scientific">Rhizobium etli (strain CIAT 652)</name>
    <dbReference type="NCBI Taxonomy" id="491916"/>
    <lineage>
        <taxon>Bacteria</taxon>
        <taxon>Pseudomonadati</taxon>
        <taxon>Pseudomonadota</taxon>
        <taxon>Alphaproteobacteria</taxon>
        <taxon>Hyphomicrobiales</taxon>
        <taxon>Rhizobiaceae</taxon>
        <taxon>Rhizobium/Agrobacterium group</taxon>
        <taxon>Rhizobium</taxon>
    </lineage>
</organism>
<keyword id="KW-0067">ATP-binding</keyword>
<keyword id="KW-0520">NAD</keyword>
<keyword id="KW-0547">Nucleotide-binding</keyword>
<keyword id="KW-0548">Nucleotidyltransferase</keyword>
<keyword id="KW-0662">Pyridine nucleotide biosynthesis</keyword>
<keyword id="KW-0808">Transferase</keyword>
<gene>
    <name evidence="1" type="primary">nadD</name>
    <name type="ordered locus">RHECIAT_CH0004359</name>
</gene>
<dbReference type="EC" id="2.7.7.18" evidence="1"/>
<dbReference type="EMBL" id="CP001074">
    <property type="protein sequence ID" value="ACE93286.1"/>
    <property type="molecule type" value="Genomic_DNA"/>
</dbReference>
<dbReference type="SMR" id="B3PRZ6"/>
<dbReference type="KEGG" id="rec:RHECIAT_CH0004359"/>
<dbReference type="eggNOG" id="COG1057">
    <property type="taxonomic scope" value="Bacteria"/>
</dbReference>
<dbReference type="HOGENOM" id="CLU_069765_2_0_5"/>
<dbReference type="UniPathway" id="UPA00253">
    <property type="reaction ID" value="UER00332"/>
</dbReference>
<dbReference type="Proteomes" id="UP000008817">
    <property type="component" value="Chromosome"/>
</dbReference>
<dbReference type="GO" id="GO:0005524">
    <property type="term" value="F:ATP binding"/>
    <property type="evidence" value="ECO:0007669"/>
    <property type="project" value="UniProtKB-KW"/>
</dbReference>
<dbReference type="GO" id="GO:0004515">
    <property type="term" value="F:nicotinate-nucleotide adenylyltransferase activity"/>
    <property type="evidence" value="ECO:0007669"/>
    <property type="project" value="UniProtKB-UniRule"/>
</dbReference>
<dbReference type="GO" id="GO:0009435">
    <property type="term" value="P:NAD biosynthetic process"/>
    <property type="evidence" value="ECO:0007669"/>
    <property type="project" value="UniProtKB-UniRule"/>
</dbReference>
<dbReference type="CDD" id="cd02165">
    <property type="entry name" value="NMNAT"/>
    <property type="match status" value="1"/>
</dbReference>
<dbReference type="Gene3D" id="3.40.50.620">
    <property type="entry name" value="HUPs"/>
    <property type="match status" value="1"/>
</dbReference>
<dbReference type="HAMAP" id="MF_00244">
    <property type="entry name" value="NaMN_adenylyltr"/>
    <property type="match status" value="1"/>
</dbReference>
<dbReference type="InterPro" id="IPR004821">
    <property type="entry name" value="Cyt_trans-like"/>
</dbReference>
<dbReference type="InterPro" id="IPR005248">
    <property type="entry name" value="NadD/NMNAT"/>
</dbReference>
<dbReference type="InterPro" id="IPR014729">
    <property type="entry name" value="Rossmann-like_a/b/a_fold"/>
</dbReference>
<dbReference type="NCBIfam" id="TIGR00482">
    <property type="entry name" value="nicotinate (nicotinamide) nucleotide adenylyltransferase"/>
    <property type="match status" value="1"/>
</dbReference>
<dbReference type="NCBIfam" id="NF000843">
    <property type="entry name" value="PRK00071.2-2"/>
    <property type="match status" value="1"/>
</dbReference>
<dbReference type="NCBIfam" id="NF000845">
    <property type="entry name" value="PRK00071.2-4"/>
    <property type="match status" value="1"/>
</dbReference>
<dbReference type="PANTHER" id="PTHR39321">
    <property type="entry name" value="NICOTINATE-NUCLEOTIDE ADENYLYLTRANSFERASE-RELATED"/>
    <property type="match status" value="1"/>
</dbReference>
<dbReference type="PANTHER" id="PTHR39321:SF3">
    <property type="entry name" value="PHOSPHOPANTETHEINE ADENYLYLTRANSFERASE"/>
    <property type="match status" value="1"/>
</dbReference>
<dbReference type="Pfam" id="PF01467">
    <property type="entry name" value="CTP_transf_like"/>
    <property type="match status" value="1"/>
</dbReference>
<dbReference type="SUPFAM" id="SSF52374">
    <property type="entry name" value="Nucleotidylyl transferase"/>
    <property type="match status" value="1"/>
</dbReference>
<name>NADD_RHIE6</name>
<feature type="chain" id="PRO_1000125357" description="Probable nicotinate-nucleotide adenylyltransferase">
    <location>
        <begin position="1"/>
        <end position="192"/>
    </location>
</feature>
<accession>B3PRZ6</accession>
<evidence type="ECO:0000255" key="1">
    <source>
        <dbReference type="HAMAP-Rule" id="MF_00244"/>
    </source>
</evidence>
<sequence length="192" mass="21327">MVVGLFGGSFNPPHQGHALVAEIAIKRLGLDQLWWMVTPGNPLKSRNQLAPLAERIAESERVAADPRIKVTAFEQALGVSYTANTLARIKARNSHVHFIWIMGADSLQTFHKWQKWQEIARTFPIAVVDRPGATLSYLSSKMTRTFDFARVDEDDARILWRKSAPAWTFIHGPRSGLSSTAIRNGAVPGAVK</sequence>
<protein>
    <recommendedName>
        <fullName evidence="1">Probable nicotinate-nucleotide adenylyltransferase</fullName>
        <ecNumber evidence="1">2.7.7.18</ecNumber>
    </recommendedName>
    <alternativeName>
        <fullName evidence="1">Deamido-NAD(+) diphosphorylase</fullName>
    </alternativeName>
    <alternativeName>
        <fullName evidence="1">Deamido-NAD(+) pyrophosphorylase</fullName>
    </alternativeName>
    <alternativeName>
        <fullName evidence="1">Nicotinate mononucleotide adenylyltransferase</fullName>
        <shortName evidence="1">NaMN adenylyltransferase</shortName>
    </alternativeName>
</protein>
<comment type="function">
    <text evidence="1">Catalyzes the reversible adenylation of nicotinate mononucleotide (NaMN) to nicotinic acid adenine dinucleotide (NaAD).</text>
</comment>
<comment type="catalytic activity">
    <reaction evidence="1">
        <text>nicotinate beta-D-ribonucleotide + ATP + H(+) = deamido-NAD(+) + diphosphate</text>
        <dbReference type="Rhea" id="RHEA:22860"/>
        <dbReference type="ChEBI" id="CHEBI:15378"/>
        <dbReference type="ChEBI" id="CHEBI:30616"/>
        <dbReference type="ChEBI" id="CHEBI:33019"/>
        <dbReference type="ChEBI" id="CHEBI:57502"/>
        <dbReference type="ChEBI" id="CHEBI:58437"/>
        <dbReference type="EC" id="2.7.7.18"/>
    </reaction>
</comment>
<comment type="pathway">
    <text evidence="1">Cofactor biosynthesis; NAD(+) biosynthesis; deamido-NAD(+) from nicotinate D-ribonucleotide: step 1/1.</text>
</comment>
<comment type="similarity">
    <text evidence="1">Belongs to the NadD family.</text>
</comment>
<proteinExistence type="inferred from homology"/>